<name>HIS7_ACET2</name>
<reference key="1">
    <citation type="submission" date="2007-02" db="EMBL/GenBank/DDBJ databases">
        <title>Complete sequence of Clostridium thermocellum ATCC 27405.</title>
        <authorList>
            <consortium name="US DOE Joint Genome Institute"/>
            <person name="Copeland A."/>
            <person name="Lucas S."/>
            <person name="Lapidus A."/>
            <person name="Barry K."/>
            <person name="Detter J.C."/>
            <person name="Glavina del Rio T."/>
            <person name="Hammon N."/>
            <person name="Israni S."/>
            <person name="Dalin E."/>
            <person name="Tice H."/>
            <person name="Pitluck S."/>
            <person name="Chertkov O."/>
            <person name="Brettin T."/>
            <person name="Bruce D."/>
            <person name="Han C."/>
            <person name="Tapia R."/>
            <person name="Gilna P."/>
            <person name="Schmutz J."/>
            <person name="Larimer F."/>
            <person name="Land M."/>
            <person name="Hauser L."/>
            <person name="Kyrpides N."/>
            <person name="Mikhailova N."/>
            <person name="Wu J.H.D."/>
            <person name="Newcomb M."/>
            <person name="Richardson P."/>
        </authorList>
    </citation>
    <scope>NUCLEOTIDE SEQUENCE [LARGE SCALE GENOMIC DNA]</scope>
    <source>
        <strain>ATCC 27405 / DSM 1237 / JCM 9322 / NBRC 103400 / NCIMB 10682 / NRRL B-4536 / VPI 7372</strain>
    </source>
</reference>
<gene>
    <name evidence="1" type="primary">hisB</name>
    <name type="ordered locus">Cthe_2884</name>
</gene>
<dbReference type="EC" id="4.2.1.19" evidence="1"/>
<dbReference type="EMBL" id="CP000568">
    <property type="protein sequence ID" value="ABN54082.1"/>
    <property type="molecule type" value="Genomic_DNA"/>
</dbReference>
<dbReference type="RefSeq" id="WP_003514577.1">
    <property type="nucleotide sequence ID" value="NC_009012.1"/>
</dbReference>
<dbReference type="SMR" id="A3DJF3"/>
<dbReference type="STRING" id="203119.Cthe_2884"/>
<dbReference type="GeneID" id="35803605"/>
<dbReference type="KEGG" id="cth:Cthe_2884"/>
<dbReference type="eggNOG" id="COG0131">
    <property type="taxonomic scope" value="Bacteria"/>
</dbReference>
<dbReference type="HOGENOM" id="CLU_044308_3_0_9"/>
<dbReference type="OrthoDB" id="9790411at2"/>
<dbReference type="UniPathway" id="UPA00031">
    <property type="reaction ID" value="UER00011"/>
</dbReference>
<dbReference type="Proteomes" id="UP000002145">
    <property type="component" value="Chromosome"/>
</dbReference>
<dbReference type="GO" id="GO:0005737">
    <property type="term" value="C:cytoplasm"/>
    <property type="evidence" value="ECO:0007669"/>
    <property type="project" value="UniProtKB-SubCell"/>
</dbReference>
<dbReference type="GO" id="GO:0004424">
    <property type="term" value="F:imidazoleglycerol-phosphate dehydratase activity"/>
    <property type="evidence" value="ECO:0007669"/>
    <property type="project" value="UniProtKB-UniRule"/>
</dbReference>
<dbReference type="GO" id="GO:0000105">
    <property type="term" value="P:L-histidine biosynthetic process"/>
    <property type="evidence" value="ECO:0007669"/>
    <property type="project" value="UniProtKB-UniRule"/>
</dbReference>
<dbReference type="CDD" id="cd07914">
    <property type="entry name" value="IGPD"/>
    <property type="match status" value="1"/>
</dbReference>
<dbReference type="FunFam" id="3.30.230.40:FF:000001">
    <property type="entry name" value="Imidazoleglycerol-phosphate dehydratase HisB"/>
    <property type="match status" value="1"/>
</dbReference>
<dbReference type="FunFam" id="3.30.230.40:FF:000003">
    <property type="entry name" value="Imidazoleglycerol-phosphate dehydratase HisB"/>
    <property type="match status" value="1"/>
</dbReference>
<dbReference type="Gene3D" id="3.30.230.40">
    <property type="entry name" value="Imidazole glycerol phosphate dehydratase, domain 1"/>
    <property type="match status" value="2"/>
</dbReference>
<dbReference type="HAMAP" id="MF_00076">
    <property type="entry name" value="HisB"/>
    <property type="match status" value="1"/>
</dbReference>
<dbReference type="InterPro" id="IPR038494">
    <property type="entry name" value="IGPD_sf"/>
</dbReference>
<dbReference type="InterPro" id="IPR000807">
    <property type="entry name" value="ImidazoleglycerolP_deHydtase"/>
</dbReference>
<dbReference type="InterPro" id="IPR020565">
    <property type="entry name" value="ImidazoleglycerP_deHydtase_CS"/>
</dbReference>
<dbReference type="InterPro" id="IPR020568">
    <property type="entry name" value="Ribosomal_Su5_D2-typ_SF"/>
</dbReference>
<dbReference type="NCBIfam" id="NF002107">
    <property type="entry name" value="PRK00951.1-2"/>
    <property type="match status" value="1"/>
</dbReference>
<dbReference type="NCBIfam" id="NF002109">
    <property type="entry name" value="PRK00951.1-5"/>
    <property type="match status" value="1"/>
</dbReference>
<dbReference type="NCBIfam" id="NF002111">
    <property type="entry name" value="PRK00951.2-1"/>
    <property type="match status" value="1"/>
</dbReference>
<dbReference type="NCBIfam" id="NF002112">
    <property type="entry name" value="PRK00951.2-2"/>
    <property type="match status" value="1"/>
</dbReference>
<dbReference type="NCBIfam" id="NF002114">
    <property type="entry name" value="PRK00951.2-4"/>
    <property type="match status" value="1"/>
</dbReference>
<dbReference type="NCBIfam" id="NF002115">
    <property type="entry name" value="PRK00951.2-5"/>
    <property type="match status" value="1"/>
</dbReference>
<dbReference type="NCBIfam" id="NF002116">
    <property type="entry name" value="PRK00951.2-6"/>
    <property type="match status" value="1"/>
</dbReference>
<dbReference type="PANTHER" id="PTHR23133:SF2">
    <property type="entry name" value="IMIDAZOLEGLYCEROL-PHOSPHATE DEHYDRATASE"/>
    <property type="match status" value="1"/>
</dbReference>
<dbReference type="PANTHER" id="PTHR23133">
    <property type="entry name" value="IMIDAZOLEGLYCEROL-PHOSPHATE DEHYDRATASE HIS7"/>
    <property type="match status" value="1"/>
</dbReference>
<dbReference type="Pfam" id="PF00475">
    <property type="entry name" value="IGPD"/>
    <property type="match status" value="1"/>
</dbReference>
<dbReference type="SUPFAM" id="SSF54211">
    <property type="entry name" value="Ribosomal protein S5 domain 2-like"/>
    <property type="match status" value="2"/>
</dbReference>
<dbReference type="PROSITE" id="PS00954">
    <property type="entry name" value="IGP_DEHYDRATASE_1"/>
    <property type="match status" value="1"/>
</dbReference>
<dbReference type="PROSITE" id="PS00955">
    <property type="entry name" value="IGP_DEHYDRATASE_2"/>
    <property type="match status" value="1"/>
</dbReference>
<organism>
    <name type="scientific">Acetivibrio thermocellus (strain ATCC 27405 / DSM 1237 / JCM 9322 / NBRC 103400 / NCIMB 10682 / NRRL B-4536 / VPI 7372)</name>
    <name type="common">Clostridium thermocellum</name>
    <dbReference type="NCBI Taxonomy" id="203119"/>
    <lineage>
        <taxon>Bacteria</taxon>
        <taxon>Bacillati</taxon>
        <taxon>Bacillota</taxon>
        <taxon>Clostridia</taxon>
        <taxon>Eubacteriales</taxon>
        <taxon>Oscillospiraceae</taxon>
        <taxon>Acetivibrio</taxon>
    </lineage>
</organism>
<proteinExistence type="inferred from homology"/>
<feature type="chain" id="PRO_1000075244" description="Imidazoleglycerol-phosphate dehydratase">
    <location>
        <begin position="1"/>
        <end position="195"/>
    </location>
</feature>
<keyword id="KW-0028">Amino-acid biosynthesis</keyword>
<keyword id="KW-0963">Cytoplasm</keyword>
<keyword id="KW-0368">Histidine biosynthesis</keyword>
<keyword id="KW-0456">Lyase</keyword>
<keyword id="KW-1185">Reference proteome</keyword>
<evidence type="ECO:0000255" key="1">
    <source>
        <dbReference type="HAMAP-Rule" id="MF_00076"/>
    </source>
</evidence>
<accession>A3DJF3</accession>
<sequence>MDRKFEVSRKTGETDITLSINIDGSGKSNISTGVGFFDHMLNLFAKHGLFDLDVKAKGDLEIDAHHTVEDVGIVLGQAIKQALGEKKSIRRYGSSFVPMDEALVLVALDLSGRPYLVFDAELKCEKLGNMETELVEEFFRAVAFNAGITLHVKALYGSNTHHIIEAMFKAFGRALDDATRKDDRIEGVMSTKGML</sequence>
<protein>
    <recommendedName>
        <fullName evidence="1">Imidazoleglycerol-phosphate dehydratase</fullName>
        <shortName evidence="1">IGPD</shortName>
        <ecNumber evidence="1">4.2.1.19</ecNumber>
    </recommendedName>
</protein>
<comment type="catalytic activity">
    <reaction evidence="1">
        <text>D-erythro-1-(imidazol-4-yl)glycerol 3-phosphate = 3-(imidazol-4-yl)-2-oxopropyl phosphate + H2O</text>
        <dbReference type="Rhea" id="RHEA:11040"/>
        <dbReference type="ChEBI" id="CHEBI:15377"/>
        <dbReference type="ChEBI" id="CHEBI:57766"/>
        <dbReference type="ChEBI" id="CHEBI:58278"/>
        <dbReference type="EC" id="4.2.1.19"/>
    </reaction>
</comment>
<comment type="pathway">
    <text evidence="1">Amino-acid biosynthesis; L-histidine biosynthesis; L-histidine from 5-phospho-alpha-D-ribose 1-diphosphate: step 6/9.</text>
</comment>
<comment type="subcellular location">
    <subcellularLocation>
        <location evidence="1">Cytoplasm</location>
    </subcellularLocation>
</comment>
<comment type="similarity">
    <text evidence="1">Belongs to the imidazoleglycerol-phosphate dehydratase family.</text>
</comment>